<proteinExistence type="inferred from homology"/>
<comment type="function">
    <text evidence="1">ATPase subunit of a proteasome-like degradation complex; this subunit has chaperone activity. The binding of ATP and its subsequent hydrolysis by HslU are essential for unfolding of protein substrates subsequently hydrolyzed by HslV. HslU recognizes the N-terminal part of its protein substrates and unfolds these before they are guided to HslV for hydrolysis.</text>
</comment>
<comment type="subunit">
    <text evidence="1">A double ring-shaped homohexamer of HslV is capped on each side by a ring-shaped HslU homohexamer. The assembly of the HslU/HslV complex is dependent on binding of ATP.</text>
</comment>
<comment type="subcellular location">
    <subcellularLocation>
        <location evidence="1">Cytoplasm</location>
    </subcellularLocation>
</comment>
<comment type="similarity">
    <text evidence="1">Belongs to the ClpX chaperone family. HslU subfamily.</text>
</comment>
<reference key="1">
    <citation type="submission" date="2008-03" db="EMBL/GenBank/DDBJ databases">
        <title>Complete sequence of chromosome of Methylobacterium radiotolerans JCM 2831.</title>
        <authorList>
            <consortium name="US DOE Joint Genome Institute"/>
            <person name="Copeland A."/>
            <person name="Lucas S."/>
            <person name="Lapidus A."/>
            <person name="Glavina del Rio T."/>
            <person name="Dalin E."/>
            <person name="Tice H."/>
            <person name="Bruce D."/>
            <person name="Goodwin L."/>
            <person name="Pitluck S."/>
            <person name="Kiss H."/>
            <person name="Brettin T."/>
            <person name="Detter J.C."/>
            <person name="Han C."/>
            <person name="Kuske C.R."/>
            <person name="Schmutz J."/>
            <person name="Larimer F."/>
            <person name="Land M."/>
            <person name="Hauser L."/>
            <person name="Kyrpides N."/>
            <person name="Mikhailova N."/>
            <person name="Marx C.J."/>
            <person name="Richardson P."/>
        </authorList>
    </citation>
    <scope>NUCLEOTIDE SEQUENCE [LARGE SCALE GENOMIC DNA]</scope>
    <source>
        <strain>ATCC 27329 / DSM 1819 / JCM 2831 / NBRC 15690 / NCIMB 10815 / 0-1</strain>
    </source>
</reference>
<gene>
    <name evidence="1" type="primary">hslU</name>
    <name type="ordered locus">Mrad2831_3084</name>
</gene>
<evidence type="ECO:0000255" key="1">
    <source>
        <dbReference type="HAMAP-Rule" id="MF_00249"/>
    </source>
</evidence>
<dbReference type="EMBL" id="CP001001">
    <property type="protein sequence ID" value="ACB25066.1"/>
    <property type="molecule type" value="Genomic_DNA"/>
</dbReference>
<dbReference type="RefSeq" id="WP_012320033.1">
    <property type="nucleotide sequence ID" value="NC_010505.1"/>
</dbReference>
<dbReference type="SMR" id="B1M5N6"/>
<dbReference type="STRING" id="426355.Mrad2831_3084"/>
<dbReference type="GeneID" id="6139130"/>
<dbReference type="KEGG" id="mrd:Mrad2831_3084"/>
<dbReference type="eggNOG" id="COG1220">
    <property type="taxonomic scope" value="Bacteria"/>
</dbReference>
<dbReference type="HOGENOM" id="CLU_033123_0_0_5"/>
<dbReference type="OrthoDB" id="9804062at2"/>
<dbReference type="Proteomes" id="UP000006589">
    <property type="component" value="Chromosome"/>
</dbReference>
<dbReference type="GO" id="GO:0009376">
    <property type="term" value="C:HslUV protease complex"/>
    <property type="evidence" value="ECO:0007669"/>
    <property type="project" value="UniProtKB-UniRule"/>
</dbReference>
<dbReference type="GO" id="GO:0005524">
    <property type="term" value="F:ATP binding"/>
    <property type="evidence" value="ECO:0007669"/>
    <property type="project" value="UniProtKB-UniRule"/>
</dbReference>
<dbReference type="GO" id="GO:0016887">
    <property type="term" value="F:ATP hydrolysis activity"/>
    <property type="evidence" value="ECO:0007669"/>
    <property type="project" value="InterPro"/>
</dbReference>
<dbReference type="GO" id="GO:0008233">
    <property type="term" value="F:peptidase activity"/>
    <property type="evidence" value="ECO:0007669"/>
    <property type="project" value="InterPro"/>
</dbReference>
<dbReference type="GO" id="GO:0036402">
    <property type="term" value="F:proteasome-activating activity"/>
    <property type="evidence" value="ECO:0007669"/>
    <property type="project" value="UniProtKB-UniRule"/>
</dbReference>
<dbReference type="GO" id="GO:0043335">
    <property type="term" value="P:protein unfolding"/>
    <property type="evidence" value="ECO:0007669"/>
    <property type="project" value="UniProtKB-UniRule"/>
</dbReference>
<dbReference type="GO" id="GO:0051603">
    <property type="term" value="P:proteolysis involved in protein catabolic process"/>
    <property type="evidence" value="ECO:0007669"/>
    <property type="project" value="TreeGrafter"/>
</dbReference>
<dbReference type="CDD" id="cd19498">
    <property type="entry name" value="RecA-like_HslU"/>
    <property type="match status" value="1"/>
</dbReference>
<dbReference type="FunFam" id="3.40.50.300:FF:000213">
    <property type="entry name" value="ATP-dependent protease ATPase subunit HslU"/>
    <property type="match status" value="1"/>
</dbReference>
<dbReference type="FunFam" id="3.40.50.300:FF:000220">
    <property type="entry name" value="ATP-dependent protease ATPase subunit HslU"/>
    <property type="match status" value="1"/>
</dbReference>
<dbReference type="Gene3D" id="1.10.8.60">
    <property type="match status" value="1"/>
</dbReference>
<dbReference type="Gene3D" id="3.40.50.300">
    <property type="entry name" value="P-loop containing nucleotide triphosphate hydrolases"/>
    <property type="match status" value="2"/>
</dbReference>
<dbReference type="HAMAP" id="MF_00249">
    <property type="entry name" value="HslU"/>
    <property type="match status" value="1"/>
</dbReference>
<dbReference type="InterPro" id="IPR003593">
    <property type="entry name" value="AAA+_ATPase"/>
</dbReference>
<dbReference type="InterPro" id="IPR050052">
    <property type="entry name" value="ATP-dep_Clp_protease_ClpX"/>
</dbReference>
<dbReference type="InterPro" id="IPR003959">
    <property type="entry name" value="ATPase_AAA_core"/>
</dbReference>
<dbReference type="InterPro" id="IPR019489">
    <property type="entry name" value="Clp_ATPase_C"/>
</dbReference>
<dbReference type="InterPro" id="IPR004491">
    <property type="entry name" value="HslU"/>
</dbReference>
<dbReference type="InterPro" id="IPR027417">
    <property type="entry name" value="P-loop_NTPase"/>
</dbReference>
<dbReference type="NCBIfam" id="TIGR00390">
    <property type="entry name" value="hslU"/>
    <property type="match status" value="1"/>
</dbReference>
<dbReference type="NCBIfam" id="NF003544">
    <property type="entry name" value="PRK05201.1"/>
    <property type="match status" value="1"/>
</dbReference>
<dbReference type="PANTHER" id="PTHR48102">
    <property type="entry name" value="ATP-DEPENDENT CLP PROTEASE ATP-BINDING SUBUNIT CLPX-LIKE, MITOCHONDRIAL-RELATED"/>
    <property type="match status" value="1"/>
</dbReference>
<dbReference type="PANTHER" id="PTHR48102:SF3">
    <property type="entry name" value="ATP-DEPENDENT PROTEASE ATPASE SUBUNIT HSLU"/>
    <property type="match status" value="1"/>
</dbReference>
<dbReference type="Pfam" id="PF00004">
    <property type="entry name" value="AAA"/>
    <property type="match status" value="1"/>
</dbReference>
<dbReference type="Pfam" id="PF07724">
    <property type="entry name" value="AAA_2"/>
    <property type="match status" value="1"/>
</dbReference>
<dbReference type="Pfam" id="PF10431">
    <property type="entry name" value="ClpB_D2-small"/>
    <property type="match status" value="1"/>
</dbReference>
<dbReference type="SMART" id="SM00382">
    <property type="entry name" value="AAA"/>
    <property type="match status" value="1"/>
</dbReference>
<dbReference type="SMART" id="SM01086">
    <property type="entry name" value="ClpB_D2-small"/>
    <property type="match status" value="1"/>
</dbReference>
<dbReference type="SUPFAM" id="SSF52540">
    <property type="entry name" value="P-loop containing nucleoside triphosphate hydrolases"/>
    <property type="match status" value="1"/>
</dbReference>
<protein>
    <recommendedName>
        <fullName evidence="1">ATP-dependent protease ATPase subunit HslU</fullName>
    </recommendedName>
    <alternativeName>
        <fullName evidence="1">Unfoldase HslU</fullName>
    </alternativeName>
</protein>
<keyword id="KW-0067">ATP-binding</keyword>
<keyword id="KW-0143">Chaperone</keyword>
<keyword id="KW-0963">Cytoplasm</keyword>
<keyword id="KW-0547">Nucleotide-binding</keyword>
<keyword id="KW-0346">Stress response</keyword>
<sequence>MTTFSPREIVSELDRFIVGQHDAKRAVAIALRNRWRRQQLTGPLREEVAPKNILMIGPTGCGKTEIARRLARLANAPFLKVEATKFTEVGYVGRDVEQIVRDLVEVAIGLTRQAKREGVKAKAEAAAENRILDALVGPTASQATRDSFRRKLRNSELDDKEVELELTSSAPAGMPMFEIPGVPGASMGAINIGDMLGKALGGQRGKPRRILVRDAYAPLMAEESDKLVDDEALVREAIREVENNGIVFLDEIDKICAREGRSSGDVSREGVQRDLLPLIEGTTVATKHGPVKTDHVLFIASGAFHVSKPADLLPELQGRLPIRVELQPLTVDDFKQILTATEASLLKQTVALMETEGVTLTFTDDAVDALARVAVEVNSSVENIGARRLQTVLERVIDEISFTATDRSGETVPIDAAYVRERVQDLASNADLSRFIL</sequence>
<organism>
    <name type="scientific">Methylobacterium radiotolerans (strain ATCC 27329 / DSM 1819 / JCM 2831 / NBRC 15690 / NCIMB 10815 / 0-1)</name>
    <dbReference type="NCBI Taxonomy" id="426355"/>
    <lineage>
        <taxon>Bacteria</taxon>
        <taxon>Pseudomonadati</taxon>
        <taxon>Pseudomonadota</taxon>
        <taxon>Alphaproteobacteria</taxon>
        <taxon>Hyphomicrobiales</taxon>
        <taxon>Methylobacteriaceae</taxon>
        <taxon>Methylobacterium</taxon>
    </lineage>
</organism>
<feature type="chain" id="PRO_1000100957" description="ATP-dependent protease ATPase subunit HslU">
    <location>
        <begin position="1"/>
        <end position="437"/>
    </location>
</feature>
<feature type="binding site" evidence="1">
    <location>
        <position position="18"/>
    </location>
    <ligand>
        <name>ATP</name>
        <dbReference type="ChEBI" id="CHEBI:30616"/>
    </ligand>
</feature>
<feature type="binding site" evidence="1">
    <location>
        <begin position="60"/>
        <end position="65"/>
    </location>
    <ligand>
        <name>ATP</name>
        <dbReference type="ChEBI" id="CHEBI:30616"/>
    </ligand>
</feature>
<feature type="binding site" evidence="1">
    <location>
        <position position="250"/>
    </location>
    <ligand>
        <name>ATP</name>
        <dbReference type="ChEBI" id="CHEBI:30616"/>
    </ligand>
</feature>
<feature type="binding site" evidence="1">
    <location>
        <position position="315"/>
    </location>
    <ligand>
        <name>ATP</name>
        <dbReference type="ChEBI" id="CHEBI:30616"/>
    </ligand>
</feature>
<feature type="binding site" evidence="1">
    <location>
        <position position="387"/>
    </location>
    <ligand>
        <name>ATP</name>
        <dbReference type="ChEBI" id="CHEBI:30616"/>
    </ligand>
</feature>
<name>HSLU_METRJ</name>
<accession>B1M5N6</accession>